<keyword id="KW-0119">Carbohydrate metabolism</keyword>
<keyword id="KW-0548">Nucleotidyltransferase</keyword>
<keyword id="KW-0808">Transferase</keyword>
<protein>
    <recommendedName>
        <fullName>UTP--glucose-1-phosphate uridylyltransferase</fullName>
        <ecNumber>2.7.7.9</ecNumber>
    </recommendedName>
    <alternativeName>
        <fullName>Alpha-D-glucosyl-1-phosphate uridylyltransferase</fullName>
    </alternativeName>
    <alternativeName>
        <fullName>UDP-glucose pyrophosphorylase</fullName>
        <shortName>UDPGP</shortName>
    </alternativeName>
    <alternativeName>
        <fullName>Uridine diphosphoglucose pyrophosphorylase</fullName>
    </alternativeName>
</protein>
<sequence length="288" mass="32424">MKKIKKAIIPAAGLGTRFLPATKAMPKEMLPILDKPTIQYIVEEASKAGIEDIIIVTGKHKRAIEDHFDNQKELEMVLENKGKADLLEKVQYSTDLANIFYVRQKEQKGLGHAIHTAKQFIGNEPFAVLLGDDIVESDTPAIKQLMDVYEETGHSVIGVQEVPESDTHRYGVIDPSAKEGSRYEVRQFVEKPKQGTAPSNLAIMGRYVLTPEIFDYLETQQEGAGNEIQLTDAIERMNSKQQVYAYDFEGNRYDVGEKLGFVKTTIEYALKDPEMSQDLKAFIKQLDI</sequence>
<gene>
    <name type="primary">gtaB</name>
    <name type="ordered locus">SE_2043</name>
</gene>
<proteinExistence type="inferred from homology"/>
<dbReference type="EC" id="2.7.7.9"/>
<dbReference type="EMBL" id="AE015929">
    <property type="protein sequence ID" value="AAO05684.1"/>
    <property type="status" value="ALT_FRAME"/>
    <property type="molecule type" value="Genomic_DNA"/>
</dbReference>
<dbReference type="RefSeq" id="NP_765598.1">
    <property type="nucleotide sequence ID" value="NC_004461.1"/>
</dbReference>
<dbReference type="SMR" id="Q8CR67"/>
<dbReference type="KEGG" id="sep:SE_2043"/>
<dbReference type="PATRIC" id="fig|176280.10.peg.1996"/>
<dbReference type="eggNOG" id="COG1210">
    <property type="taxonomic scope" value="Bacteria"/>
</dbReference>
<dbReference type="HOGENOM" id="CLU_029499_1_3_9"/>
<dbReference type="OrthoDB" id="9803871at2"/>
<dbReference type="UniPathway" id="UPA00894"/>
<dbReference type="Proteomes" id="UP000001411">
    <property type="component" value="Chromosome"/>
</dbReference>
<dbReference type="GO" id="GO:0003983">
    <property type="term" value="F:UTP:glucose-1-phosphate uridylyltransferase activity"/>
    <property type="evidence" value="ECO:0007669"/>
    <property type="project" value="UniProtKB-EC"/>
</dbReference>
<dbReference type="GO" id="GO:0009246">
    <property type="term" value="P:enterobacterial common antigen biosynthetic process"/>
    <property type="evidence" value="ECO:0007669"/>
    <property type="project" value="UniProtKB-UniPathway"/>
</dbReference>
<dbReference type="GO" id="GO:0006011">
    <property type="term" value="P:UDP-alpha-D-glucose metabolic process"/>
    <property type="evidence" value="ECO:0007669"/>
    <property type="project" value="InterPro"/>
</dbReference>
<dbReference type="CDD" id="cd02541">
    <property type="entry name" value="UGPase_prokaryotic"/>
    <property type="match status" value="1"/>
</dbReference>
<dbReference type="FunFam" id="3.90.550.10:FF:000045">
    <property type="entry name" value="UTP--glucose-1-phosphate uridylyltransferase"/>
    <property type="match status" value="1"/>
</dbReference>
<dbReference type="Gene3D" id="3.90.550.10">
    <property type="entry name" value="Spore Coat Polysaccharide Biosynthesis Protein SpsA, Chain A"/>
    <property type="match status" value="1"/>
</dbReference>
<dbReference type="InterPro" id="IPR005771">
    <property type="entry name" value="GalU_uridylyltTrfase_bac/arc"/>
</dbReference>
<dbReference type="InterPro" id="IPR005835">
    <property type="entry name" value="NTP_transferase_dom"/>
</dbReference>
<dbReference type="InterPro" id="IPR029044">
    <property type="entry name" value="Nucleotide-diphossugar_trans"/>
</dbReference>
<dbReference type="NCBIfam" id="TIGR01099">
    <property type="entry name" value="galU"/>
    <property type="match status" value="1"/>
</dbReference>
<dbReference type="PANTHER" id="PTHR43197">
    <property type="entry name" value="UTP--GLUCOSE-1-PHOSPHATE URIDYLYLTRANSFERASE"/>
    <property type="match status" value="1"/>
</dbReference>
<dbReference type="PANTHER" id="PTHR43197:SF1">
    <property type="entry name" value="UTP--GLUCOSE-1-PHOSPHATE URIDYLYLTRANSFERASE"/>
    <property type="match status" value="1"/>
</dbReference>
<dbReference type="Pfam" id="PF00483">
    <property type="entry name" value="NTP_transferase"/>
    <property type="match status" value="1"/>
</dbReference>
<dbReference type="SUPFAM" id="SSF53448">
    <property type="entry name" value="Nucleotide-diphospho-sugar transferases"/>
    <property type="match status" value="1"/>
</dbReference>
<evidence type="ECO:0000250" key="1"/>
<evidence type="ECO:0000305" key="2"/>
<reference key="1">
    <citation type="journal article" date="2003" name="Mol. Microbiol.">
        <title>Genome-based analysis of virulence genes in a non-biofilm-forming Staphylococcus epidermidis strain (ATCC 12228).</title>
        <authorList>
            <person name="Zhang Y.-Q."/>
            <person name="Ren S.-X."/>
            <person name="Li H.-L."/>
            <person name="Wang Y.-X."/>
            <person name="Fu G."/>
            <person name="Yang J."/>
            <person name="Qin Z.-Q."/>
            <person name="Miao Y.-G."/>
            <person name="Wang W.-Y."/>
            <person name="Chen R.-S."/>
            <person name="Shen Y."/>
            <person name="Chen Z."/>
            <person name="Yuan Z.-H."/>
            <person name="Zhao G.-P."/>
            <person name="Qu D."/>
            <person name="Danchin A."/>
            <person name="Wen Y.-M."/>
        </authorList>
    </citation>
    <scope>NUCLEOTIDE SEQUENCE [LARGE SCALE GENOMIC DNA]</scope>
    <source>
        <strain>ATCC 12228 / FDA PCI 1200</strain>
    </source>
</reference>
<accession>Q8CR67</accession>
<name>GTAB_STAES</name>
<feature type="chain" id="PRO_0000308311" description="UTP--glucose-1-phosphate uridylyltransferase">
    <location>
        <begin position="1"/>
        <end position="288"/>
    </location>
</feature>
<organism>
    <name type="scientific">Staphylococcus epidermidis (strain ATCC 12228 / FDA PCI 1200)</name>
    <dbReference type="NCBI Taxonomy" id="176280"/>
    <lineage>
        <taxon>Bacteria</taxon>
        <taxon>Bacillati</taxon>
        <taxon>Bacillota</taxon>
        <taxon>Bacilli</taxon>
        <taxon>Bacillales</taxon>
        <taxon>Staphylococcaceae</taxon>
        <taxon>Staphylococcus</taxon>
    </lineage>
</organism>
<comment type="function">
    <text evidence="1">Catalyzes the formation of UDP-glucose from glucose-1-phosphate and UTP. This is an intermediate step in the biosynthesis of diglucosyl-diacylglycerol (Glc2-DAG), i.e. a glycolipid found in the membrane, which is also used as a membrane anchor for lipoteichoic acid (LTA) (By similarity).</text>
</comment>
<comment type="catalytic activity">
    <reaction>
        <text>alpha-D-glucose 1-phosphate + UTP + H(+) = UDP-alpha-D-glucose + diphosphate</text>
        <dbReference type="Rhea" id="RHEA:19889"/>
        <dbReference type="ChEBI" id="CHEBI:15378"/>
        <dbReference type="ChEBI" id="CHEBI:33019"/>
        <dbReference type="ChEBI" id="CHEBI:46398"/>
        <dbReference type="ChEBI" id="CHEBI:58601"/>
        <dbReference type="ChEBI" id="CHEBI:58885"/>
        <dbReference type="EC" id="2.7.7.9"/>
    </reaction>
</comment>
<comment type="pathway">
    <text>Glycolipid metabolism; diglucosyl-diacylglycerol biosynthesis.</text>
</comment>
<comment type="similarity">
    <text evidence="2">Belongs to the UDPGP type 2 family.</text>
</comment>
<comment type="sequence caution" evidence="2">
    <conflict type="frameshift">
        <sequence resource="EMBL-CDS" id="AAO05684"/>
    </conflict>
</comment>